<organism>
    <name type="scientific">Dehalococcoides mccartyi (strain ATCC BAA-2266 / KCTC 15142 / 195)</name>
    <name type="common">Dehalococcoides ethenogenes (strain 195)</name>
    <dbReference type="NCBI Taxonomy" id="243164"/>
    <lineage>
        <taxon>Bacteria</taxon>
        <taxon>Bacillati</taxon>
        <taxon>Chloroflexota</taxon>
        <taxon>Dehalococcoidia</taxon>
        <taxon>Dehalococcoidales</taxon>
        <taxon>Dehalococcoidaceae</taxon>
        <taxon>Dehalococcoides</taxon>
    </lineage>
</organism>
<proteinExistence type="inferred from homology"/>
<comment type="catalytic activity">
    <reaction>
        <text>an acyl phosphate + H2O = a carboxylate + phosphate + H(+)</text>
        <dbReference type="Rhea" id="RHEA:14965"/>
        <dbReference type="ChEBI" id="CHEBI:15377"/>
        <dbReference type="ChEBI" id="CHEBI:15378"/>
        <dbReference type="ChEBI" id="CHEBI:29067"/>
        <dbReference type="ChEBI" id="CHEBI:43474"/>
        <dbReference type="ChEBI" id="CHEBI:59918"/>
        <dbReference type="EC" id="3.6.1.7"/>
    </reaction>
</comment>
<comment type="similarity">
    <text evidence="2">Belongs to the acylphosphatase family.</text>
</comment>
<keyword id="KW-0378">Hydrolase</keyword>
<feature type="chain" id="PRO_0000326696" description="Acylphosphatase">
    <location>
        <begin position="1"/>
        <end position="91"/>
    </location>
</feature>
<feature type="domain" description="Acylphosphatase-like" evidence="1">
    <location>
        <begin position="3"/>
        <end position="91"/>
    </location>
</feature>
<feature type="active site" evidence="1">
    <location>
        <position position="18"/>
    </location>
</feature>
<feature type="active site" evidence="1">
    <location>
        <position position="36"/>
    </location>
</feature>
<accession>Q3Z7Q6</accession>
<sequence length="91" mass="10189">MHCLKAVVKGKVQGVYFRDFTRTQAIRLGLCGYAQNLESGTDVEVIAEGDKDILLEFLKLLRSGPPHAEVQEVEVSWSSTNGNYGDFHIKY</sequence>
<dbReference type="EC" id="3.6.1.7"/>
<dbReference type="EMBL" id="CP000027">
    <property type="protein sequence ID" value="AAW39732.1"/>
    <property type="molecule type" value="Genomic_DNA"/>
</dbReference>
<dbReference type="RefSeq" id="WP_010936722.1">
    <property type="nucleotide sequence ID" value="NC_002936.3"/>
</dbReference>
<dbReference type="SMR" id="Q3Z7Q6"/>
<dbReference type="FunCoup" id="Q3Z7Q6">
    <property type="interactions" value="118"/>
</dbReference>
<dbReference type="STRING" id="243164.DET1027"/>
<dbReference type="GeneID" id="3229694"/>
<dbReference type="KEGG" id="det:DET1027"/>
<dbReference type="PATRIC" id="fig|243164.10.peg.967"/>
<dbReference type="eggNOG" id="COG1254">
    <property type="taxonomic scope" value="Bacteria"/>
</dbReference>
<dbReference type="HOGENOM" id="CLU_141932_1_0_0"/>
<dbReference type="InParanoid" id="Q3Z7Q6"/>
<dbReference type="Proteomes" id="UP000008289">
    <property type="component" value="Chromosome"/>
</dbReference>
<dbReference type="GO" id="GO:0003998">
    <property type="term" value="F:acylphosphatase activity"/>
    <property type="evidence" value="ECO:0007669"/>
    <property type="project" value="UniProtKB-EC"/>
</dbReference>
<dbReference type="Gene3D" id="3.30.70.100">
    <property type="match status" value="1"/>
</dbReference>
<dbReference type="InterPro" id="IPR020456">
    <property type="entry name" value="Acylphosphatase"/>
</dbReference>
<dbReference type="InterPro" id="IPR001792">
    <property type="entry name" value="Acylphosphatase-like_dom"/>
</dbReference>
<dbReference type="InterPro" id="IPR036046">
    <property type="entry name" value="Acylphosphatase-like_dom_sf"/>
</dbReference>
<dbReference type="InterPro" id="IPR017968">
    <property type="entry name" value="Acylphosphatase_CS"/>
</dbReference>
<dbReference type="NCBIfam" id="NF011021">
    <property type="entry name" value="PRK14450.1"/>
    <property type="match status" value="1"/>
</dbReference>
<dbReference type="PANTHER" id="PTHR47268">
    <property type="entry name" value="ACYLPHOSPHATASE"/>
    <property type="match status" value="1"/>
</dbReference>
<dbReference type="PANTHER" id="PTHR47268:SF4">
    <property type="entry name" value="ACYLPHOSPHATASE"/>
    <property type="match status" value="1"/>
</dbReference>
<dbReference type="Pfam" id="PF00708">
    <property type="entry name" value="Acylphosphatase"/>
    <property type="match status" value="1"/>
</dbReference>
<dbReference type="SUPFAM" id="SSF54975">
    <property type="entry name" value="Acylphosphatase/BLUF domain-like"/>
    <property type="match status" value="1"/>
</dbReference>
<dbReference type="PROSITE" id="PS00150">
    <property type="entry name" value="ACYLPHOSPHATASE_1"/>
    <property type="match status" value="1"/>
</dbReference>
<dbReference type="PROSITE" id="PS51160">
    <property type="entry name" value="ACYLPHOSPHATASE_3"/>
    <property type="match status" value="1"/>
</dbReference>
<gene>
    <name type="primary">acyP</name>
    <name type="ordered locus">DET1027</name>
</gene>
<evidence type="ECO:0000255" key="1">
    <source>
        <dbReference type="PROSITE-ProRule" id="PRU00520"/>
    </source>
</evidence>
<evidence type="ECO:0000305" key="2"/>
<reference key="1">
    <citation type="journal article" date="2005" name="Science">
        <title>Genome sequence of the PCE-dechlorinating bacterium Dehalococcoides ethenogenes.</title>
        <authorList>
            <person name="Seshadri R."/>
            <person name="Adrian L."/>
            <person name="Fouts D.E."/>
            <person name="Eisen J.A."/>
            <person name="Phillippy A.M."/>
            <person name="Methe B.A."/>
            <person name="Ward N.L."/>
            <person name="Nelson W.C."/>
            <person name="DeBoy R.T."/>
            <person name="Khouri H.M."/>
            <person name="Kolonay J.F."/>
            <person name="Dodson R.J."/>
            <person name="Daugherty S.C."/>
            <person name="Brinkac L.M."/>
            <person name="Sullivan S.A."/>
            <person name="Madupu R."/>
            <person name="Nelson K.E."/>
            <person name="Kang K.H."/>
            <person name="Impraim M."/>
            <person name="Tran K."/>
            <person name="Robinson J.M."/>
            <person name="Forberger H.A."/>
            <person name="Fraser C.M."/>
            <person name="Zinder S.H."/>
            <person name="Heidelberg J.F."/>
        </authorList>
    </citation>
    <scope>NUCLEOTIDE SEQUENCE [LARGE SCALE GENOMIC DNA]</scope>
    <source>
        <strain>ATCC BAA-2266 / KCTC 15142 / 195</strain>
    </source>
</reference>
<protein>
    <recommendedName>
        <fullName>Acylphosphatase</fullName>
        <ecNumber>3.6.1.7</ecNumber>
    </recommendedName>
    <alternativeName>
        <fullName>Acylphosphate phosphohydrolase</fullName>
    </alternativeName>
</protein>
<name>ACYP_DEHM1</name>